<name>DCR1C_CHICK</name>
<proteinExistence type="evidence at transcript level"/>
<protein>
    <recommendedName>
        <fullName>Protein artemis</fullName>
        <ecNumber>3.1.-.-</ecNumber>
    </recommendedName>
    <alternativeName>
        <fullName>DNA cross-link repair 1C protein</fullName>
    </alternativeName>
    <alternativeName>
        <fullName>SNM1 homolog C</fullName>
        <shortName>chSNM1C</shortName>
    </alternativeName>
    <alternativeName>
        <fullName>SNM1-like protein</fullName>
    </alternativeName>
</protein>
<accession>Q5QJC2</accession>
<evidence type="ECO:0000250" key="1"/>
<evidence type="ECO:0000256" key="2">
    <source>
        <dbReference type="SAM" id="MobiDB-lite"/>
    </source>
</evidence>
<evidence type="ECO:0000305" key="3"/>
<reference key="1">
    <citation type="journal article" date="2004" name="Mol. Cell. Biol.">
        <title>DNA cross-link repair protein SNM1A interacts with PIAS1 in nuclear focus formation.</title>
        <authorList>
            <person name="Ishiai M."/>
            <person name="Kimura M."/>
            <person name="Namikoshi K."/>
            <person name="Yamazoe M."/>
            <person name="Yamamoto K."/>
            <person name="Arakawa H."/>
            <person name="Agematsu K."/>
            <person name="Matsushita N."/>
            <person name="Takeda S."/>
            <person name="Buerstedde J.-M."/>
            <person name="Takata M."/>
        </authorList>
    </citation>
    <scope>NUCLEOTIDE SEQUENCE [MRNA]</scope>
</reference>
<gene>
    <name type="primary">DCLRE1C</name>
    <name type="synonym">SNM1C</name>
</gene>
<sequence>MSRFGGRLREYPQLSIDRFDYDNLRARAYFLSHCHKDHMKGLRAPALRRRLQSSLKVKLYCSPVTKELLLTNSKYAFWENHIVALEVETPTQISLVDETTGEKEDIEVTLLPAGHCPGSVMFLFQGENGTVLYTGDFRLAKGEAARMELLHSGTSVKDIQSVYLDTTFCDPRFYHIPSREECLSGILELVRSWTTLSRYHVVWLNCKAAYGYEYLFINLSEELGIKVHVNKLDMFKNMPEILYHITTDRYTQIHACRHPKDDDYVRGNRLPCGITCQNGTPLHVISIKPSTMWFGERIKKTNVIVRTGESTYRACFSFHSSYSEIMDFLSYIRPVNVYPNVLPVGGSEDKVMEILQPLCRSYRRNTEPRYKPLGTLKRACKRNLSDTDEDELFDTELSARPKIAKYQGEESKPSQTAQPENAERNINESTESYRANTAYTSLKVDFVDCEESNDDDDDDDDDDKEDDSEKNTAQVLSHEPDANSIASCNGIPSNQQESNADIPSWDMFFKCNKVDESSENEDNFPSSADAGGSQSLFSDSDGVSDSTHISSQNSSQSTHISEQGSQGWDSQMDTVLITSQERNAADFSCFSRGGSRTALLSHDTPRDSQADDSRWKLLGQNPSCASDVICDLKSEDCEKDAEAGTAPTQDLLVEISDSSRTPDLELKRDSQSSSDFEIPLTPDAEIPQRDKLHYLYKKLAAGESIMRKNSPEKR</sequence>
<dbReference type="EC" id="3.1.-.-"/>
<dbReference type="EMBL" id="AY376898">
    <property type="protein sequence ID" value="AAR27406.1"/>
    <property type="molecule type" value="mRNA"/>
</dbReference>
<dbReference type="RefSeq" id="NP_001026765.1">
    <property type="nucleotide sequence ID" value="NM_001031594.1"/>
</dbReference>
<dbReference type="SMR" id="Q5QJC2"/>
<dbReference type="FunCoup" id="Q5QJC2">
    <property type="interactions" value="888"/>
</dbReference>
<dbReference type="STRING" id="9031.ENSGALP00000022533"/>
<dbReference type="PaxDb" id="9031-ENSGALP00000022533"/>
<dbReference type="GeneID" id="430764"/>
<dbReference type="KEGG" id="gga:430764"/>
<dbReference type="CTD" id="64421"/>
<dbReference type="VEuPathDB" id="HostDB:geneid_430764"/>
<dbReference type="eggNOG" id="KOG1361">
    <property type="taxonomic scope" value="Eukaryota"/>
</dbReference>
<dbReference type="InParanoid" id="Q5QJC2"/>
<dbReference type="OrthoDB" id="262529at2759"/>
<dbReference type="PhylomeDB" id="Q5QJC2"/>
<dbReference type="Reactome" id="R-GGA-5693571">
    <property type="pathway name" value="Nonhomologous End-Joining (NHEJ)"/>
</dbReference>
<dbReference type="PRO" id="PR:Q5QJC2"/>
<dbReference type="Proteomes" id="UP000000539">
    <property type="component" value="Chromosome 1"/>
</dbReference>
<dbReference type="Bgee" id="ENSGALG00000013926">
    <property type="expression patterns" value="Expressed in spermatid and 13 other cell types or tissues"/>
</dbReference>
<dbReference type="GO" id="GO:0070419">
    <property type="term" value="C:nonhomologous end joining complex"/>
    <property type="evidence" value="ECO:0000250"/>
    <property type="project" value="UniProtKB"/>
</dbReference>
<dbReference type="GO" id="GO:0005634">
    <property type="term" value="C:nucleus"/>
    <property type="evidence" value="ECO:0007669"/>
    <property type="project" value="UniProtKB-SubCell"/>
</dbReference>
<dbReference type="GO" id="GO:0035312">
    <property type="term" value="F:5'-3' DNA exonuclease activity"/>
    <property type="evidence" value="ECO:0000318"/>
    <property type="project" value="GO_Central"/>
</dbReference>
<dbReference type="GO" id="GO:0003684">
    <property type="term" value="F:damaged DNA binding"/>
    <property type="evidence" value="ECO:0000318"/>
    <property type="project" value="GO_Central"/>
</dbReference>
<dbReference type="GO" id="GO:0004519">
    <property type="term" value="F:endonuclease activity"/>
    <property type="evidence" value="ECO:0007669"/>
    <property type="project" value="UniProtKB-KW"/>
</dbReference>
<dbReference type="GO" id="GO:0002250">
    <property type="term" value="P:adaptive immune response"/>
    <property type="evidence" value="ECO:0007669"/>
    <property type="project" value="UniProtKB-KW"/>
</dbReference>
<dbReference type="GO" id="GO:0006310">
    <property type="term" value="P:DNA recombination"/>
    <property type="evidence" value="ECO:0007669"/>
    <property type="project" value="UniProtKB-KW"/>
</dbReference>
<dbReference type="GO" id="GO:0006303">
    <property type="term" value="P:double-strand break repair via nonhomologous end joining"/>
    <property type="evidence" value="ECO:0000318"/>
    <property type="project" value="GO_Central"/>
</dbReference>
<dbReference type="GO" id="GO:0036297">
    <property type="term" value="P:interstrand cross-link repair"/>
    <property type="evidence" value="ECO:0000318"/>
    <property type="project" value="GO_Central"/>
</dbReference>
<dbReference type="GO" id="GO:0000723">
    <property type="term" value="P:telomere maintenance"/>
    <property type="evidence" value="ECO:0000318"/>
    <property type="project" value="GO_Central"/>
</dbReference>
<dbReference type="CDD" id="cd16297">
    <property type="entry name" value="artemis-SNM1C-like_MBL-fold"/>
    <property type="match status" value="1"/>
</dbReference>
<dbReference type="FunFam" id="3.40.50.12650:FF:000002">
    <property type="entry name" value="DNA cross-link repair 1C"/>
    <property type="match status" value="1"/>
</dbReference>
<dbReference type="FunFam" id="3.60.15.10:FF:000018">
    <property type="entry name" value="DNA cross-link repair 1C"/>
    <property type="match status" value="1"/>
</dbReference>
<dbReference type="Gene3D" id="3.40.50.12650">
    <property type="match status" value="1"/>
</dbReference>
<dbReference type="Gene3D" id="3.60.15.10">
    <property type="entry name" value="Ribonuclease Z/Hydroxyacylglutathione hydrolase-like"/>
    <property type="match status" value="1"/>
</dbReference>
<dbReference type="InterPro" id="IPR011084">
    <property type="entry name" value="DRMBL"/>
</dbReference>
<dbReference type="InterPro" id="IPR001279">
    <property type="entry name" value="Metallo-B-lactamas"/>
</dbReference>
<dbReference type="InterPro" id="IPR036866">
    <property type="entry name" value="RibonucZ/Hydroxyglut_hydro"/>
</dbReference>
<dbReference type="PANTHER" id="PTHR23240">
    <property type="entry name" value="DNA CROSS-LINK REPAIR PROTEIN PSO2/SNM1-RELATED"/>
    <property type="match status" value="1"/>
</dbReference>
<dbReference type="PANTHER" id="PTHR23240:SF8">
    <property type="entry name" value="PROTEIN ARTEMIS"/>
    <property type="match status" value="1"/>
</dbReference>
<dbReference type="Pfam" id="PF07522">
    <property type="entry name" value="DRMBL"/>
    <property type="match status" value="1"/>
</dbReference>
<dbReference type="Pfam" id="PF12706">
    <property type="entry name" value="Lactamase_B_2"/>
    <property type="match status" value="1"/>
</dbReference>
<dbReference type="SUPFAM" id="SSF56281">
    <property type="entry name" value="Metallo-hydrolase/oxidoreductase"/>
    <property type="match status" value="1"/>
</dbReference>
<organism>
    <name type="scientific">Gallus gallus</name>
    <name type="common">Chicken</name>
    <dbReference type="NCBI Taxonomy" id="9031"/>
    <lineage>
        <taxon>Eukaryota</taxon>
        <taxon>Metazoa</taxon>
        <taxon>Chordata</taxon>
        <taxon>Craniata</taxon>
        <taxon>Vertebrata</taxon>
        <taxon>Euteleostomi</taxon>
        <taxon>Archelosauria</taxon>
        <taxon>Archosauria</taxon>
        <taxon>Dinosauria</taxon>
        <taxon>Saurischia</taxon>
        <taxon>Theropoda</taxon>
        <taxon>Coelurosauria</taxon>
        <taxon>Aves</taxon>
        <taxon>Neognathae</taxon>
        <taxon>Galloanserae</taxon>
        <taxon>Galliformes</taxon>
        <taxon>Phasianidae</taxon>
        <taxon>Phasianinae</taxon>
        <taxon>Gallus</taxon>
    </lineage>
</organism>
<keyword id="KW-1064">Adaptive immunity</keyword>
<keyword id="KW-0227">DNA damage</keyword>
<keyword id="KW-0233">DNA recombination</keyword>
<keyword id="KW-0234">DNA repair</keyword>
<keyword id="KW-0255">Endonuclease</keyword>
<keyword id="KW-0269">Exonuclease</keyword>
<keyword id="KW-0378">Hydrolase</keyword>
<keyword id="KW-0391">Immunity</keyword>
<keyword id="KW-0460">Magnesium</keyword>
<keyword id="KW-0540">Nuclease</keyword>
<keyword id="KW-0539">Nucleus</keyword>
<keyword id="KW-0597">Phosphoprotein</keyword>
<keyword id="KW-1185">Reference proteome</keyword>
<comment type="function">
    <text evidence="1">Required for V(D)J recombination, the process by which exons encoding the antigen-binding domains of immunoglobulins and T-cell receptor proteins are assembled from individual V, (D), and J gene segments. V(D)J recombination is initiated by the lymphoid specific RAG endonuclease complex, which generates site specific DNA double strand breaks (DSBs). These DSBs present two types of DNA end structures: hairpin sealed coding ends and phosphorylated blunt signal ends. These ends are independently repaired by the non homologous end joining (NHEJ) pathway to form coding and signal joints respectively. This protein exhibits single-strand specific 5'-3' exonuclease activity in isolation, and acquires endonucleolytic activity on 5' and 3' hairpins and overhangs when in a complex with PRKDC. The latter activity is required specifically for the resolution of closed hairpins prior to the formation of the coding joint. May also be required for the repair of complex DSBs induced by ionizing radiation, which require substantial end-processing prior to religation by NHEJ (By similarity).</text>
</comment>
<comment type="subunit">
    <text evidence="1">Interacts with PRKDC.</text>
</comment>
<comment type="subcellular location">
    <subcellularLocation>
        <location evidence="1">Nucleus</location>
    </subcellularLocation>
</comment>
<comment type="PTM">
    <text evidence="1">Phosphorylation on undefined residues by PRKDC may stimulate endonucleolytic activity on 5' and 3' hairpins and overhangs. PRKDC must remain present, even after phosphorylation, for efficient hairpin opening (By similarity).</text>
</comment>
<comment type="similarity">
    <text evidence="3">Belongs to the DNA repair metallo-beta-lactamase (DRMBL) family.</text>
</comment>
<feature type="chain" id="PRO_0000209126" description="Protein artemis">
    <location>
        <begin position="1"/>
        <end position="714"/>
    </location>
</feature>
<feature type="region of interest" description="Disordered" evidence="2">
    <location>
        <begin position="391"/>
        <end position="500"/>
    </location>
</feature>
<feature type="region of interest" description="Disordered" evidence="2">
    <location>
        <begin position="516"/>
        <end position="577"/>
    </location>
</feature>
<feature type="region of interest" description="Disordered" evidence="2">
    <location>
        <begin position="598"/>
        <end position="617"/>
    </location>
</feature>
<feature type="region of interest" description="Disordered" evidence="2">
    <location>
        <begin position="638"/>
        <end position="683"/>
    </location>
</feature>
<feature type="compositionally biased region" description="Polar residues" evidence="2">
    <location>
        <begin position="427"/>
        <end position="440"/>
    </location>
</feature>
<feature type="compositionally biased region" description="Acidic residues" evidence="2">
    <location>
        <begin position="447"/>
        <end position="468"/>
    </location>
</feature>
<feature type="compositionally biased region" description="Polar residues" evidence="2">
    <location>
        <begin position="484"/>
        <end position="500"/>
    </location>
</feature>
<feature type="compositionally biased region" description="Polar residues" evidence="2">
    <location>
        <begin position="532"/>
        <end position="543"/>
    </location>
</feature>
<feature type="compositionally biased region" description="Low complexity" evidence="2">
    <location>
        <begin position="544"/>
        <end position="561"/>
    </location>
</feature>
<feature type="compositionally biased region" description="Polar residues" evidence="2">
    <location>
        <begin position="562"/>
        <end position="577"/>
    </location>
</feature>
<feature type="compositionally biased region" description="Basic and acidic residues" evidence="2">
    <location>
        <begin position="603"/>
        <end position="615"/>
    </location>
</feature>
<feature type="compositionally biased region" description="Basic and acidic residues" evidence="2">
    <location>
        <begin position="660"/>
        <end position="670"/>
    </location>
</feature>
<feature type="modified residue" description="Phosphoserine; by ATM" evidence="1">
    <location>
        <position position="670"/>
    </location>
</feature>